<comment type="catalytic activity">
    <reaction evidence="1">
        <text>5-amino-1-(5-phospho-D-ribosyl)imidazole-4-carboxylate + L-aspartate + ATP = (2S)-2-[5-amino-1-(5-phospho-beta-D-ribosyl)imidazole-4-carboxamido]succinate + ADP + phosphate + 2 H(+)</text>
        <dbReference type="Rhea" id="RHEA:22628"/>
        <dbReference type="ChEBI" id="CHEBI:15378"/>
        <dbReference type="ChEBI" id="CHEBI:29991"/>
        <dbReference type="ChEBI" id="CHEBI:30616"/>
        <dbReference type="ChEBI" id="CHEBI:43474"/>
        <dbReference type="ChEBI" id="CHEBI:58443"/>
        <dbReference type="ChEBI" id="CHEBI:77657"/>
        <dbReference type="ChEBI" id="CHEBI:456216"/>
        <dbReference type="EC" id="6.3.2.6"/>
    </reaction>
</comment>
<comment type="pathway">
    <text evidence="1">Purine metabolism; IMP biosynthesis via de novo pathway; 5-amino-1-(5-phospho-D-ribosyl)imidazole-4-carboxamide from 5-amino-1-(5-phospho-D-ribosyl)imidazole-4-carboxylate: step 1/2.</text>
</comment>
<comment type="similarity">
    <text evidence="1">Belongs to the SAICAR synthetase family.</text>
</comment>
<evidence type="ECO:0000255" key="1">
    <source>
        <dbReference type="HAMAP-Rule" id="MF_00137"/>
    </source>
</evidence>
<gene>
    <name evidence="1" type="primary">purC</name>
    <name type="ordered locus">Mfla_2242</name>
</gene>
<sequence>MTTPLMHSSIKSLKLINQGKVRDIYDIDDRHMLLVASDRLSAFDVILPTPIKDKGAILTQIANFWFEKLKHIVPNHLTGIDPNTVVKDPAEQAQLGPRALVVKKLKPLPIEAIVRGYLAGSGWKEYQASQSVCGIPLPAGLQEAAQLPEPLFTPSSKAEVGDHDENITLEKCAQLIGPELADKVARVSVQLYKEAAAYALGRGIIIADTKFEFGLDEAGELYLIDEVLTPDSSRFWPQDQYQVGSNPPSFDKQYVRDWLESTGWNKTPPGPALPDEVAARTADKYREAFERLTGKPF</sequence>
<feature type="chain" id="PRO_1000018731" description="Phosphoribosylaminoimidazole-succinocarboxamide synthase">
    <location>
        <begin position="1"/>
        <end position="297"/>
    </location>
</feature>
<name>PUR7_METFK</name>
<accession>Q1GZ28</accession>
<proteinExistence type="inferred from homology"/>
<organism>
    <name type="scientific">Methylobacillus flagellatus (strain ATCC 51484 / DSM 6875 / VKM B-1610 / KT)</name>
    <dbReference type="NCBI Taxonomy" id="265072"/>
    <lineage>
        <taxon>Bacteria</taxon>
        <taxon>Pseudomonadati</taxon>
        <taxon>Pseudomonadota</taxon>
        <taxon>Betaproteobacteria</taxon>
        <taxon>Nitrosomonadales</taxon>
        <taxon>Methylophilaceae</taxon>
        <taxon>Methylobacillus</taxon>
    </lineage>
</organism>
<dbReference type="EC" id="6.3.2.6" evidence="1"/>
<dbReference type="EMBL" id="CP000284">
    <property type="protein sequence ID" value="ABE50509.1"/>
    <property type="molecule type" value="Genomic_DNA"/>
</dbReference>
<dbReference type="RefSeq" id="WP_011480463.1">
    <property type="nucleotide sequence ID" value="NC_007947.1"/>
</dbReference>
<dbReference type="SMR" id="Q1GZ28"/>
<dbReference type="STRING" id="265072.Mfla_2242"/>
<dbReference type="KEGG" id="mfa:Mfla_2242"/>
<dbReference type="eggNOG" id="COG0152">
    <property type="taxonomic scope" value="Bacteria"/>
</dbReference>
<dbReference type="HOGENOM" id="CLU_045637_0_0_4"/>
<dbReference type="OrthoDB" id="9801549at2"/>
<dbReference type="UniPathway" id="UPA00074">
    <property type="reaction ID" value="UER00131"/>
</dbReference>
<dbReference type="Proteomes" id="UP000002440">
    <property type="component" value="Chromosome"/>
</dbReference>
<dbReference type="GO" id="GO:0005737">
    <property type="term" value="C:cytoplasm"/>
    <property type="evidence" value="ECO:0007669"/>
    <property type="project" value="TreeGrafter"/>
</dbReference>
<dbReference type="GO" id="GO:0005524">
    <property type="term" value="F:ATP binding"/>
    <property type="evidence" value="ECO:0007669"/>
    <property type="project" value="UniProtKB-KW"/>
</dbReference>
<dbReference type="GO" id="GO:0004639">
    <property type="term" value="F:phosphoribosylaminoimidazolesuccinocarboxamide synthase activity"/>
    <property type="evidence" value="ECO:0007669"/>
    <property type="project" value="UniProtKB-UniRule"/>
</dbReference>
<dbReference type="GO" id="GO:0006189">
    <property type="term" value="P:'de novo' IMP biosynthetic process"/>
    <property type="evidence" value="ECO:0007669"/>
    <property type="project" value="UniProtKB-UniRule"/>
</dbReference>
<dbReference type="CDD" id="cd01414">
    <property type="entry name" value="SAICAR_synt_Sc"/>
    <property type="match status" value="1"/>
</dbReference>
<dbReference type="FunFam" id="3.30.470.20:FF:000015">
    <property type="entry name" value="Phosphoribosylaminoimidazole-succinocarboxamide synthase"/>
    <property type="match status" value="1"/>
</dbReference>
<dbReference type="Gene3D" id="3.30.470.20">
    <property type="entry name" value="ATP-grasp fold, B domain"/>
    <property type="match status" value="1"/>
</dbReference>
<dbReference type="Gene3D" id="3.30.200.20">
    <property type="entry name" value="Phosphorylase Kinase, domain 1"/>
    <property type="match status" value="1"/>
</dbReference>
<dbReference type="HAMAP" id="MF_00137">
    <property type="entry name" value="SAICAR_synth"/>
    <property type="match status" value="1"/>
</dbReference>
<dbReference type="InterPro" id="IPR028923">
    <property type="entry name" value="SAICAR_synt/ADE2_N"/>
</dbReference>
<dbReference type="InterPro" id="IPR001636">
    <property type="entry name" value="SAICAR_synth"/>
</dbReference>
<dbReference type="InterPro" id="IPR018236">
    <property type="entry name" value="SAICAR_synthetase_CS"/>
</dbReference>
<dbReference type="NCBIfam" id="NF010568">
    <property type="entry name" value="PRK13961.1"/>
    <property type="match status" value="1"/>
</dbReference>
<dbReference type="NCBIfam" id="TIGR00081">
    <property type="entry name" value="purC"/>
    <property type="match status" value="1"/>
</dbReference>
<dbReference type="PANTHER" id="PTHR43700">
    <property type="entry name" value="PHOSPHORIBOSYLAMINOIMIDAZOLE-SUCCINOCARBOXAMIDE SYNTHASE"/>
    <property type="match status" value="1"/>
</dbReference>
<dbReference type="PANTHER" id="PTHR43700:SF1">
    <property type="entry name" value="PHOSPHORIBOSYLAMINOIMIDAZOLE-SUCCINOCARBOXAMIDE SYNTHASE"/>
    <property type="match status" value="1"/>
</dbReference>
<dbReference type="Pfam" id="PF01259">
    <property type="entry name" value="SAICAR_synt"/>
    <property type="match status" value="1"/>
</dbReference>
<dbReference type="SUPFAM" id="SSF56104">
    <property type="entry name" value="SAICAR synthase-like"/>
    <property type="match status" value="1"/>
</dbReference>
<dbReference type="PROSITE" id="PS01057">
    <property type="entry name" value="SAICAR_SYNTHETASE_1"/>
    <property type="match status" value="1"/>
</dbReference>
<dbReference type="PROSITE" id="PS01058">
    <property type="entry name" value="SAICAR_SYNTHETASE_2"/>
    <property type="match status" value="1"/>
</dbReference>
<keyword id="KW-0067">ATP-binding</keyword>
<keyword id="KW-0436">Ligase</keyword>
<keyword id="KW-0547">Nucleotide-binding</keyword>
<keyword id="KW-0658">Purine biosynthesis</keyword>
<keyword id="KW-1185">Reference proteome</keyword>
<reference key="1">
    <citation type="submission" date="2006-03" db="EMBL/GenBank/DDBJ databases">
        <title>Complete sequence of Methylobacillus flagellatus KT.</title>
        <authorList>
            <consortium name="US DOE Joint Genome Institute"/>
            <person name="Copeland A."/>
            <person name="Lucas S."/>
            <person name="Lapidus A."/>
            <person name="Barry K."/>
            <person name="Detter J.C."/>
            <person name="Glavina del Rio T."/>
            <person name="Hammon N."/>
            <person name="Israni S."/>
            <person name="Dalin E."/>
            <person name="Tice H."/>
            <person name="Pitluck S."/>
            <person name="Brettin T."/>
            <person name="Bruce D."/>
            <person name="Han C."/>
            <person name="Tapia R."/>
            <person name="Saunders E."/>
            <person name="Gilna P."/>
            <person name="Schmutz J."/>
            <person name="Larimer F."/>
            <person name="Land M."/>
            <person name="Kyrpides N."/>
            <person name="Anderson I."/>
            <person name="Richardson P."/>
        </authorList>
    </citation>
    <scope>NUCLEOTIDE SEQUENCE [LARGE SCALE GENOMIC DNA]</scope>
    <source>
        <strain>ATCC 51484 / DSM 6875 / VKM B-1610 / KT</strain>
    </source>
</reference>
<protein>
    <recommendedName>
        <fullName evidence="1">Phosphoribosylaminoimidazole-succinocarboxamide synthase</fullName>
        <ecNumber evidence="1">6.3.2.6</ecNumber>
    </recommendedName>
    <alternativeName>
        <fullName evidence="1">SAICAR synthetase</fullName>
    </alternativeName>
</protein>